<dbReference type="EMBL" id="BX247951">
    <property type="protein sequence ID" value="CAK10800.1"/>
    <property type="molecule type" value="Genomic_DNA"/>
</dbReference>
<dbReference type="EMBL" id="BC134846">
    <property type="protein sequence ID" value="AAI34847.1"/>
    <property type="molecule type" value="mRNA"/>
</dbReference>
<dbReference type="RefSeq" id="NP_001038598.1">
    <property type="nucleotide sequence ID" value="NM_001045133.1"/>
</dbReference>
<dbReference type="RefSeq" id="XP_005159191.1">
    <property type="nucleotide sequence ID" value="XM_005159134.5"/>
</dbReference>
<dbReference type="RefSeq" id="XP_005159192.1">
    <property type="nucleotide sequence ID" value="XM_005159135.3"/>
</dbReference>
<dbReference type="RefSeq" id="XP_009291861.1">
    <property type="nucleotide sequence ID" value="XM_009293586.2"/>
</dbReference>
<dbReference type="RefSeq" id="XP_068070914.1">
    <property type="nucleotide sequence ID" value="XM_068214813.1"/>
</dbReference>
<dbReference type="SMR" id="Q1LXZ9"/>
<dbReference type="FunCoup" id="Q1LXZ9">
    <property type="interactions" value="1219"/>
</dbReference>
<dbReference type="STRING" id="7955.ENSDARP00000122471"/>
<dbReference type="PaxDb" id="7955-ENSDARP00000122471"/>
<dbReference type="Ensembl" id="ENSDART00000138103">
    <property type="protein sequence ID" value="ENSDARP00000122471"/>
    <property type="gene ID" value="ENSDARG00000062448"/>
</dbReference>
<dbReference type="GeneID" id="567457"/>
<dbReference type="KEGG" id="dre:567457"/>
<dbReference type="AGR" id="ZFIN:ZDB-GENE-050419-82"/>
<dbReference type="CTD" id="567457"/>
<dbReference type="ZFIN" id="ZDB-GENE-050419-82">
    <property type="gene designation" value="skor1b"/>
</dbReference>
<dbReference type="eggNOG" id="ENOG502QQC2">
    <property type="taxonomic scope" value="Eukaryota"/>
</dbReference>
<dbReference type="HOGENOM" id="CLU_011930_1_1_1"/>
<dbReference type="InParanoid" id="Q1LXZ9"/>
<dbReference type="OrthoDB" id="3938623at2759"/>
<dbReference type="PhylomeDB" id="Q1LXZ9"/>
<dbReference type="TreeFam" id="TF324133"/>
<dbReference type="PRO" id="PR:Q1LXZ9"/>
<dbReference type="Proteomes" id="UP000000437">
    <property type="component" value="Alternate scaffold 18"/>
</dbReference>
<dbReference type="Proteomes" id="UP000000437">
    <property type="component" value="Chromosome 18"/>
</dbReference>
<dbReference type="Bgee" id="ENSDARG00000062448">
    <property type="expression patterns" value="Expressed in brain and 7 other cell types or tissues"/>
</dbReference>
<dbReference type="ExpressionAtlas" id="Q1LXZ9">
    <property type="expression patterns" value="baseline"/>
</dbReference>
<dbReference type="GO" id="GO:0005737">
    <property type="term" value="C:cytoplasm"/>
    <property type="evidence" value="ECO:0000318"/>
    <property type="project" value="GO_Central"/>
</dbReference>
<dbReference type="GO" id="GO:0005634">
    <property type="term" value="C:nucleus"/>
    <property type="evidence" value="ECO:0000318"/>
    <property type="project" value="GO_Central"/>
</dbReference>
<dbReference type="GO" id="GO:0005667">
    <property type="term" value="C:transcription regulator complex"/>
    <property type="evidence" value="ECO:0000318"/>
    <property type="project" value="GO_Central"/>
</dbReference>
<dbReference type="GO" id="GO:0000981">
    <property type="term" value="F:DNA-binding transcription factor activity, RNA polymerase II-specific"/>
    <property type="evidence" value="ECO:0000318"/>
    <property type="project" value="GO_Central"/>
</dbReference>
<dbReference type="GO" id="GO:0000978">
    <property type="term" value="F:RNA polymerase II cis-regulatory region sequence-specific DNA binding"/>
    <property type="evidence" value="ECO:0000318"/>
    <property type="project" value="GO_Central"/>
</dbReference>
<dbReference type="GO" id="GO:0046332">
    <property type="term" value="F:SMAD binding"/>
    <property type="evidence" value="ECO:0000318"/>
    <property type="project" value="GO_Central"/>
</dbReference>
<dbReference type="GO" id="GO:0030514">
    <property type="term" value="P:negative regulation of BMP signaling pathway"/>
    <property type="evidence" value="ECO:0000318"/>
    <property type="project" value="GO_Central"/>
</dbReference>
<dbReference type="GO" id="GO:0000122">
    <property type="term" value="P:negative regulation of transcription by RNA polymerase II"/>
    <property type="evidence" value="ECO:0000318"/>
    <property type="project" value="GO_Central"/>
</dbReference>
<dbReference type="CDD" id="cd21080">
    <property type="entry name" value="DHD_Skor"/>
    <property type="match status" value="1"/>
</dbReference>
<dbReference type="FunFam" id="3.10.390.10:FF:000001">
    <property type="entry name" value="SKI family transcriptional corepressor 1"/>
    <property type="match status" value="1"/>
</dbReference>
<dbReference type="FunFam" id="3.10.260.20:FF:000003">
    <property type="entry name" value="SKI family transcriptional corepressor 1 homolog-B-like"/>
    <property type="match status" value="1"/>
</dbReference>
<dbReference type="Gene3D" id="3.10.390.10">
    <property type="entry name" value="SAND domain-like"/>
    <property type="match status" value="1"/>
</dbReference>
<dbReference type="Gene3D" id="3.10.260.20">
    <property type="entry name" value="Ski"/>
    <property type="match status" value="1"/>
</dbReference>
<dbReference type="InterPro" id="IPR014890">
    <property type="entry name" value="c-SKI_SMAD4-bd_dom"/>
</dbReference>
<dbReference type="InterPro" id="IPR009061">
    <property type="entry name" value="DNA-bd_dom_put_sf"/>
</dbReference>
<dbReference type="InterPro" id="IPR010919">
    <property type="entry name" value="SAND-like_dom_sf"/>
</dbReference>
<dbReference type="InterPro" id="IPR003380">
    <property type="entry name" value="SKI/SNO/DAC"/>
</dbReference>
<dbReference type="InterPro" id="IPR037000">
    <property type="entry name" value="Ski_DNA-bd_sf"/>
</dbReference>
<dbReference type="InterPro" id="IPR023216">
    <property type="entry name" value="Tscrpt_reg_SKI_SnoN"/>
</dbReference>
<dbReference type="PANTHER" id="PTHR10005:SF8">
    <property type="entry name" value="SKI FAMILY TRANSCRIPTIONAL COREPRESSOR 1"/>
    <property type="match status" value="1"/>
</dbReference>
<dbReference type="PANTHER" id="PTHR10005">
    <property type="entry name" value="SKI ONCOGENE-RELATED"/>
    <property type="match status" value="1"/>
</dbReference>
<dbReference type="Pfam" id="PF08782">
    <property type="entry name" value="c-SKI_SMAD_bind"/>
    <property type="match status" value="1"/>
</dbReference>
<dbReference type="Pfam" id="PF02437">
    <property type="entry name" value="Ski_Sno_DHD"/>
    <property type="match status" value="1"/>
</dbReference>
<dbReference type="SMART" id="SM01046">
    <property type="entry name" value="c-SKI_SMAD_bind"/>
    <property type="match status" value="1"/>
</dbReference>
<dbReference type="SUPFAM" id="SSF46955">
    <property type="entry name" value="Putative DNA-binding domain"/>
    <property type="match status" value="1"/>
</dbReference>
<dbReference type="SUPFAM" id="SSF63763">
    <property type="entry name" value="SAND domain-like"/>
    <property type="match status" value="1"/>
</dbReference>
<protein>
    <recommendedName>
        <fullName>SKI family transcriptional corepressor 1 homolog-B</fullName>
    </recommendedName>
    <alternativeName>
        <fullName>Ladybird homeobox corepressor 1 homolog-B</fullName>
    </alternativeName>
</protein>
<gene>
    <name type="primary">skor1b</name>
    <name type="synonym">lbxcor1</name>
    <name type="ORF">si:dkey-246a16.3</name>
</gene>
<sequence length="751" mass="84682">MESIPNQLPAGRDSSCSPNSKDLQSYSGPPLKPNQVSETSLYGIPIVSLVIDGQERLCLAQISNTLLKNYSYNEIHNRRVALGITCVQCTPVQLEILRRAGAMPISSRRCGMITKREAERLCKSFLGAHSPPKLPENFAFDVSHECAWGSRGNFIPARYNSSRAKCIKCSFCNMYFSPNKFIFHSHRTPESKYTQPDAANFNSWRRHLKLSDKNSSDDVIHAWEDVKAMFNGGSRKRTLPIGRSESSPSQPPRGQTQGEPSDVPHKTLRCEDDRVNVTMPSSIRSYPVIPVPSKSFGMLQKIPPPLFPHPYGFPAFGLCQKKDDGEVMGEPNKTNLSGVFWPSPKDSAYTSFPMFWPTTGSLAMPTYHHAQPKPPSDVLCARHNELDVSEQSDRSTSTPKDSLLDNERCSSTQSTRNEEDKSGDESRSIEGIPPTSRKISYISAFRPVVKDVESIAKLYGNRGPYSGPRSGYMSPDFLSESSSYRSVSPDVDSVDDPDVDVESHKAHEDEECLQLSVDDRRSPHSLTLAQSEGVKGQDQENTQMHTLNDLHSTNSSETRPSDMESHGNKHTTRFEVYARERDEHVHQMSTSYFGSATTYQRETSVKDVHEEEPSSTVEEMEPKNHQDENNISEERLKEPNDVCADEEAICKDTGNRGSLIEKNIESMAKEELQKQLVEQVELRKKLEREFQNLKDSFQDQMKRELSYREEMVQQLQIVREAHDALHHFSCKMLTPRHCTGTCTFKPPLLPP</sequence>
<accession>Q1LXZ9</accession>
<accession>A4IFZ1</accession>
<comment type="function">
    <text evidence="1">May inhibit BMP signaling.</text>
</comment>
<comment type="subcellular location">
    <subcellularLocation>
        <location evidence="1">Nucleus</location>
    </subcellularLocation>
</comment>
<comment type="similarity">
    <text evidence="4">Belongs to the SKI family.</text>
</comment>
<proteinExistence type="evidence at transcript level"/>
<feature type="chain" id="PRO_0000334610" description="SKI family transcriptional corepressor 1 homolog-B">
    <location>
        <begin position="1"/>
        <end position="751"/>
    </location>
</feature>
<feature type="region of interest" description="Disordered" evidence="3">
    <location>
        <begin position="1"/>
        <end position="30"/>
    </location>
</feature>
<feature type="region of interest" description="Disordered" evidence="3">
    <location>
        <begin position="234"/>
        <end position="267"/>
    </location>
</feature>
<feature type="region of interest" description="Disordered" evidence="3">
    <location>
        <begin position="386"/>
        <end position="434"/>
    </location>
</feature>
<feature type="region of interest" description="Disordered" evidence="3">
    <location>
        <begin position="459"/>
        <end position="569"/>
    </location>
</feature>
<feature type="region of interest" description="Disordered" evidence="3">
    <location>
        <begin position="600"/>
        <end position="635"/>
    </location>
</feature>
<feature type="coiled-coil region" evidence="2">
    <location>
        <begin position="666"/>
        <end position="704"/>
    </location>
</feature>
<feature type="compositionally biased region" description="Polar residues" evidence="3">
    <location>
        <begin position="14"/>
        <end position="27"/>
    </location>
</feature>
<feature type="compositionally biased region" description="Polar residues" evidence="3">
    <location>
        <begin position="244"/>
        <end position="259"/>
    </location>
</feature>
<feature type="compositionally biased region" description="Basic and acidic residues" evidence="3">
    <location>
        <begin position="416"/>
        <end position="428"/>
    </location>
</feature>
<feature type="compositionally biased region" description="Low complexity" evidence="3">
    <location>
        <begin position="479"/>
        <end position="491"/>
    </location>
</feature>
<feature type="compositionally biased region" description="Polar residues" evidence="3">
    <location>
        <begin position="539"/>
        <end position="558"/>
    </location>
</feature>
<feature type="compositionally biased region" description="Basic and acidic residues" evidence="3">
    <location>
        <begin position="559"/>
        <end position="569"/>
    </location>
</feature>
<feature type="compositionally biased region" description="Basic and acidic residues" evidence="3">
    <location>
        <begin position="603"/>
        <end position="612"/>
    </location>
</feature>
<feature type="compositionally biased region" description="Basic and acidic residues" evidence="3">
    <location>
        <begin position="620"/>
        <end position="635"/>
    </location>
</feature>
<feature type="sequence conflict" description="In Ref. 2; AAI34847." evidence="4" ref="2">
    <location>
        <position position="720"/>
    </location>
</feature>
<name>SKR1B_DANRE</name>
<keyword id="KW-0175">Coiled coil</keyword>
<keyword id="KW-0539">Nucleus</keyword>
<keyword id="KW-1185">Reference proteome</keyword>
<keyword id="KW-0678">Repressor</keyword>
<keyword id="KW-0804">Transcription</keyword>
<keyword id="KW-0805">Transcription regulation</keyword>
<evidence type="ECO:0000250" key="1"/>
<evidence type="ECO:0000255" key="2"/>
<evidence type="ECO:0000256" key="3">
    <source>
        <dbReference type="SAM" id="MobiDB-lite"/>
    </source>
</evidence>
<evidence type="ECO:0000305" key="4"/>
<reference key="1">
    <citation type="journal article" date="2013" name="Nature">
        <title>The zebrafish reference genome sequence and its relationship to the human genome.</title>
        <authorList>
            <person name="Howe K."/>
            <person name="Clark M.D."/>
            <person name="Torroja C.F."/>
            <person name="Torrance J."/>
            <person name="Berthelot C."/>
            <person name="Muffato M."/>
            <person name="Collins J.E."/>
            <person name="Humphray S."/>
            <person name="McLaren K."/>
            <person name="Matthews L."/>
            <person name="McLaren S."/>
            <person name="Sealy I."/>
            <person name="Caccamo M."/>
            <person name="Churcher C."/>
            <person name="Scott C."/>
            <person name="Barrett J.C."/>
            <person name="Koch R."/>
            <person name="Rauch G.J."/>
            <person name="White S."/>
            <person name="Chow W."/>
            <person name="Kilian B."/>
            <person name="Quintais L.T."/>
            <person name="Guerra-Assuncao J.A."/>
            <person name="Zhou Y."/>
            <person name="Gu Y."/>
            <person name="Yen J."/>
            <person name="Vogel J.H."/>
            <person name="Eyre T."/>
            <person name="Redmond S."/>
            <person name="Banerjee R."/>
            <person name="Chi J."/>
            <person name="Fu B."/>
            <person name="Langley E."/>
            <person name="Maguire S.F."/>
            <person name="Laird G.K."/>
            <person name="Lloyd D."/>
            <person name="Kenyon E."/>
            <person name="Donaldson S."/>
            <person name="Sehra H."/>
            <person name="Almeida-King J."/>
            <person name="Loveland J."/>
            <person name="Trevanion S."/>
            <person name="Jones M."/>
            <person name="Quail M."/>
            <person name="Willey D."/>
            <person name="Hunt A."/>
            <person name="Burton J."/>
            <person name="Sims S."/>
            <person name="McLay K."/>
            <person name="Plumb B."/>
            <person name="Davis J."/>
            <person name="Clee C."/>
            <person name="Oliver K."/>
            <person name="Clark R."/>
            <person name="Riddle C."/>
            <person name="Elliot D."/>
            <person name="Threadgold G."/>
            <person name="Harden G."/>
            <person name="Ware D."/>
            <person name="Begum S."/>
            <person name="Mortimore B."/>
            <person name="Kerry G."/>
            <person name="Heath P."/>
            <person name="Phillimore B."/>
            <person name="Tracey A."/>
            <person name="Corby N."/>
            <person name="Dunn M."/>
            <person name="Johnson C."/>
            <person name="Wood J."/>
            <person name="Clark S."/>
            <person name="Pelan S."/>
            <person name="Griffiths G."/>
            <person name="Smith M."/>
            <person name="Glithero R."/>
            <person name="Howden P."/>
            <person name="Barker N."/>
            <person name="Lloyd C."/>
            <person name="Stevens C."/>
            <person name="Harley J."/>
            <person name="Holt K."/>
            <person name="Panagiotidis G."/>
            <person name="Lovell J."/>
            <person name="Beasley H."/>
            <person name="Henderson C."/>
            <person name="Gordon D."/>
            <person name="Auger K."/>
            <person name="Wright D."/>
            <person name="Collins J."/>
            <person name="Raisen C."/>
            <person name="Dyer L."/>
            <person name="Leung K."/>
            <person name="Robertson L."/>
            <person name="Ambridge K."/>
            <person name="Leongamornlert D."/>
            <person name="McGuire S."/>
            <person name="Gilderthorp R."/>
            <person name="Griffiths C."/>
            <person name="Manthravadi D."/>
            <person name="Nichol S."/>
            <person name="Barker G."/>
            <person name="Whitehead S."/>
            <person name="Kay M."/>
            <person name="Brown J."/>
            <person name="Murnane C."/>
            <person name="Gray E."/>
            <person name="Humphries M."/>
            <person name="Sycamore N."/>
            <person name="Barker D."/>
            <person name="Saunders D."/>
            <person name="Wallis J."/>
            <person name="Babbage A."/>
            <person name="Hammond S."/>
            <person name="Mashreghi-Mohammadi M."/>
            <person name="Barr L."/>
            <person name="Martin S."/>
            <person name="Wray P."/>
            <person name="Ellington A."/>
            <person name="Matthews N."/>
            <person name="Ellwood M."/>
            <person name="Woodmansey R."/>
            <person name="Clark G."/>
            <person name="Cooper J."/>
            <person name="Tromans A."/>
            <person name="Grafham D."/>
            <person name="Skuce C."/>
            <person name="Pandian R."/>
            <person name="Andrews R."/>
            <person name="Harrison E."/>
            <person name="Kimberley A."/>
            <person name="Garnett J."/>
            <person name="Fosker N."/>
            <person name="Hall R."/>
            <person name="Garner P."/>
            <person name="Kelly D."/>
            <person name="Bird C."/>
            <person name="Palmer S."/>
            <person name="Gehring I."/>
            <person name="Berger A."/>
            <person name="Dooley C.M."/>
            <person name="Ersan-Urun Z."/>
            <person name="Eser C."/>
            <person name="Geiger H."/>
            <person name="Geisler M."/>
            <person name="Karotki L."/>
            <person name="Kirn A."/>
            <person name="Konantz J."/>
            <person name="Konantz M."/>
            <person name="Oberlander M."/>
            <person name="Rudolph-Geiger S."/>
            <person name="Teucke M."/>
            <person name="Lanz C."/>
            <person name="Raddatz G."/>
            <person name="Osoegawa K."/>
            <person name="Zhu B."/>
            <person name="Rapp A."/>
            <person name="Widaa S."/>
            <person name="Langford C."/>
            <person name="Yang F."/>
            <person name="Schuster S.C."/>
            <person name="Carter N.P."/>
            <person name="Harrow J."/>
            <person name="Ning Z."/>
            <person name="Herrero J."/>
            <person name="Searle S.M."/>
            <person name="Enright A."/>
            <person name="Geisler R."/>
            <person name="Plasterk R.H."/>
            <person name="Lee C."/>
            <person name="Westerfield M."/>
            <person name="de Jong P.J."/>
            <person name="Zon L.I."/>
            <person name="Postlethwait J.H."/>
            <person name="Nusslein-Volhard C."/>
            <person name="Hubbard T.J."/>
            <person name="Roest Crollius H."/>
            <person name="Rogers J."/>
            <person name="Stemple D.L."/>
        </authorList>
    </citation>
    <scope>NUCLEOTIDE SEQUENCE [LARGE SCALE GENOMIC DNA]</scope>
    <source>
        <strain>Tuebingen</strain>
    </source>
</reference>
<reference key="2">
    <citation type="submission" date="2007-03" db="EMBL/GenBank/DDBJ databases">
        <authorList>
            <consortium name="NIH - Zebrafish Gene Collection (ZGC) project"/>
        </authorList>
    </citation>
    <scope>NUCLEOTIDE SEQUENCE [LARGE SCALE MRNA]</scope>
    <source>
        <strain>WIK</strain>
    </source>
</reference>
<organism>
    <name type="scientific">Danio rerio</name>
    <name type="common">Zebrafish</name>
    <name type="synonym">Brachydanio rerio</name>
    <dbReference type="NCBI Taxonomy" id="7955"/>
    <lineage>
        <taxon>Eukaryota</taxon>
        <taxon>Metazoa</taxon>
        <taxon>Chordata</taxon>
        <taxon>Craniata</taxon>
        <taxon>Vertebrata</taxon>
        <taxon>Euteleostomi</taxon>
        <taxon>Actinopterygii</taxon>
        <taxon>Neopterygii</taxon>
        <taxon>Teleostei</taxon>
        <taxon>Ostariophysi</taxon>
        <taxon>Cypriniformes</taxon>
        <taxon>Danionidae</taxon>
        <taxon>Danioninae</taxon>
        <taxon>Danio</taxon>
    </lineage>
</organism>